<organism>
    <name type="scientific">Rattus norvegicus</name>
    <name type="common">Rat</name>
    <dbReference type="NCBI Taxonomy" id="10116"/>
    <lineage>
        <taxon>Eukaryota</taxon>
        <taxon>Metazoa</taxon>
        <taxon>Chordata</taxon>
        <taxon>Craniata</taxon>
        <taxon>Vertebrata</taxon>
        <taxon>Euteleostomi</taxon>
        <taxon>Mammalia</taxon>
        <taxon>Eutheria</taxon>
        <taxon>Euarchontoglires</taxon>
        <taxon>Glires</taxon>
        <taxon>Rodentia</taxon>
        <taxon>Myomorpha</taxon>
        <taxon>Muroidea</taxon>
        <taxon>Muridae</taxon>
        <taxon>Murinae</taxon>
        <taxon>Rattus</taxon>
    </lineage>
</organism>
<proteinExistence type="evidence at transcript level"/>
<gene>
    <name type="primary">Zw10</name>
</gene>
<sequence length="777" mass="87967">MASFVTEVLAHSGSLEKEDLGTRISRLTRRVEEIKGEVCNMISKKYSEFLPTMQSAQALVTQVDTLSNDIDQLKSRIETEVCRDLHISTVEFTNLKQRLERDSVVLNLLKQLQEFSSAIEEYNSALAEKKYIPAARLLEEAQECLKLLKSKKCFDLKMLKSLSMELTVQKQNILYHLGEDWQKLVVWKFPPSKDTSSLESCLQTELHLCTEQPEKEMTPLPSISSVLLAFSILGELPTKLKSFGQMLLKYILKPLVTCPSLHAVIERQPNSVSICFQSLATDSEHPPPPEAFAKIQLVLEVLQKQLLDLPLDADLEIGKVPEIVLAEMLGEVIWEDLSDCLIRNCLVYSIPTNSSKLQQYEEIIQSTEEFEKSLKEMRFLKGDTTDLLKYARNINSHFANKKCQDVIVAARHLMTSEIHNTVKIGPDCEETLPDLPSPDADHRLQVQVCKVQFTDAGNLEPETSLDPRSFSLPTCRISEAVKKLMELAYQTLLEATTSSDQCAVQLFYSVRNIFHLFHDVVPTYHKENLQKLPQLAAIHHNNCMYIAHHLLTLGHQFRSRLTPILCDGTTTFVDLVPGFRRLGTECFLAQMRTQKGELLERLSSARSFANMDDEENYSAASKAVRQVLHQLKRLGIVWQDVLPVNIYCKAMGTLLNTVIAEMIGRITALEDISTEDGDRLYSLCKTVMDEGPQVFAPLSDENKNKKYQEEVPVYVSKWMPFKELMIMLQASLQEIGDRWADGKGPLATAFPSSEVKALIRALFQNTERRAAALAKIK</sequence>
<protein>
    <recommendedName>
        <fullName>Centromere/kinetochore protein zw10 homolog</fullName>
    </recommendedName>
</protein>
<name>ZW10_RAT</name>
<comment type="function">
    <text evidence="1">Essential component of the mitotic checkpoint, which prevents cells from prematurely exiting mitosis. Required for the assembly of the dynein-dynactin and MAD1-MAD2 complexes onto kinetochores. Its function related to the spindle assembly machinery is proposed to depend on its association in the mitotic RZZ complex. Involved in regulation of membrane traffic between the Golgi and the endoplasmic reticulum (ER); the function is proposed to depend on its association in the interphase NRZ complex which is believed to play a role in SNARE assembly at the ER (By similarity).</text>
</comment>
<comment type="subunit">
    <text evidence="1">Interacts with NBAS and KNTC1/ROD; the interactions are mutually exclusive and indicative for its association in two different vesicle tethering complexes (By similarity). Component of the RZZ complex composed of KNTC1/ROD, ZW10 and ZWILCH (By similarity). Component of the NRZ complex composed of NBAS, ZW10 and RINT1/TIP20L; NRZ associates with SNAREs STX18, USE1L, BNIP1/SEC20L and SEC22B (the assembly has been described as syntaxin 18 complex) (By similarity). Interacts directly with RINT1/TIP20L bound to BNIP1/SEC20L (By similarity). Interacts with C19orf25 and ZWINT (By similarity). Interacts with ZFYVE1 (By similarity). Interacts with RAB18 and this interaction is enhanced in the presence of ZFYVE1 (By similarity).</text>
</comment>
<comment type="subcellular location">
    <subcellularLocation>
        <location evidence="1">Cytoplasm</location>
    </subcellularLocation>
    <subcellularLocation>
        <location evidence="1">Endoplasmic reticulum membrane</location>
        <topology evidence="1">Peripheral membrane protein</topology>
    </subcellularLocation>
    <subcellularLocation>
        <location evidence="1">Chromosome</location>
        <location evidence="1">Centromere</location>
        <location evidence="1">Kinetochore</location>
    </subcellularLocation>
    <subcellularLocation>
        <location evidence="1">Cytoplasm</location>
        <location evidence="1">Cytoskeleton</location>
        <location evidence="1">Spindle</location>
    </subcellularLocation>
    <subcellularLocation>
        <location evidence="1">Lipid droplet</location>
    </subcellularLocation>
    <text evidence="1">Dynamic pattern of localization during the cell cycle. In most cells at interphase, present diffusely in the cytoplasm. In prometaphase, associated with the kinetochore. At metaphase, detected both at the kinetochores and, most prominently, at the spindle, particularly at the spindle poles. In very early anaphase, detected on segregating kinetochores. In late anaphase and telophase, accumulates at the spindle midzone.</text>
</comment>
<comment type="similarity">
    <text evidence="3">Belongs to the ZW10 family.</text>
</comment>
<accession>Q4V8C2</accession>
<keyword id="KW-0007">Acetylation</keyword>
<keyword id="KW-0131">Cell cycle</keyword>
<keyword id="KW-0132">Cell division</keyword>
<keyword id="KW-0137">Centromere</keyword>
<keyword id="KW-0158">Chromosome</keyword>
<keyword id="KW-0175">Coiled coil</keyword>
<keyword id="KW-0963">Cytoplasm</keyword>
<keyword id="KW-0206">Cytoskeleton</keyword>
<keyword id="KW-0256">Endoplasmic reticulum</keyword>
<keyword id="KW-0931">ER-Golgi transport</keyword>
<keyword id="KW-0995">Kinetochore</keyword>
<keyword id="KW-0551">Lipid droplet</keyword>
<keyword id="KW-0472">Membrane</keyword>
<keyword id="KW-0498">Mitosis</keyword>
<keyword id="KW-0597">Phosphoprotein</keyword>
<keyword id="KW-0653">Protein transport</keyword>
<keyword id="KW-1185">Reference proteome</keyword>
<keyword id="KW-0813">Transport</keyword>
<dbReference type="EMBL" id="BC097452">
    <property type="protein sequence ID" value="AAH97452.1"/>
    <property type="molecule type" value="mRNA"/>
</dbReference>
<dbReference type="RefSeq" id="NP_001019972.1">
    <property type="nucleotide sequence ID" value="NM_001024801.2"/>
</dbReference>
<dbReference type="SMR" id="Q4V8C2"/>
<dbReference type="FunCoup" id="Q4V8C2">
    <property type="interactions" value="4163"/>
</dbReference>
<dbReference type="STRING" id="10116.ENSRNOP00000071533"/>
<dbReference type="iPTMnet" id="Q4V8C2"/>
<dbReference type="PhosphoSitePlus" id="Q4V8C2"/>
<dbReference type="jPOST" id="Q4V8C2"/>
<dbReference type="PaxDb" id="10116-ENSRNOP00000010595"/>
<dbReference type="Ensembl" id="ENSRNOT00000080712.2">
    <property type="protein sequence ID" value="ENSRNOP00000071533.1"/>
    <property type="gene ID" value="ENSRNOG00000054479.2"/>
</dbReference>
<dbReference type="GeneID" id="363059"/>
<dbReference type="KEGG" id="rno:363059"/>
<dbReference type="UCSC" id="RGD:1309197">
    <property type="organism name" value="rat"/>
</dbReference>
<dbReference type="AGR" id="RGD:1309197"/>
<dbReference type="CTD" id="9183"/>
<dbReference type="RGD" id="1309197">
    <property type="gene designation" value="Zw10"/>
</dbReference>
<dbReference type="eggNOG" id="KOG2163">
    <property type="taxonomic scope" value="Eukaryota"/>
</dbReference>
<dbReference type="GeneTree" id="ENSGT00390000016427"/>
<dbReference type="HOGENOM" id="CLU_012948_0_0_1"/>
<dbReference type="InParanoid" id="Q4V8C2"/>
<dbReference type="OMA" id="HHLLTMG"/>
<dbReference type="OrthoDB" id="534815at2759"/>
<dbReference type="PhylomeDB" id="Q4V8C2"/>
<dbReference type="TreeFam" id="TF105966"/>
<dbReference type="Reactome" id="R-RNO-141444">
    <property type="pathway name" value="Amplification of signal from unattached kinetochores via a MAD2 inhibitory signal"/>
</dbReference>
<dbReference type="Reactome" id="R-RNO-2467813">
    <property type="pathway name" value="Separation of Sister Chromatids"/>
</dbReference>
<dbReference type="Reactome" id="R-RNO-2500257">
    <property type="pathway name" value="Resolution of Sister Chromatid Cohesion"/>
</dbReference>
<dbReference type="Reactome" id="R-RNO-5663220">
    <property type="pathway name" value="RHO GTPases Activate Formins"/>
</dbReference>
<dbReference type="Reactome" id="R-RNO-6811434">
    <property type="pathway name" value="COPI-dependent Golgi-to-ER retrograde traffic"/>
</dbReference>
<dbReference type="Reactome" id="R-RNO-68877">
    <property type="pathway name" value="Mitotic Prometaphase"/>
</dbReference>
<dbReference type="Reactome" id="R-RNO-9648025">
    <property type="pathway name" value="EML4 and NUDC in mitotic spindle formation"/>
</dbReference>
<dbReference type="PRO" id="PR:Q4V8C2"/>
<dbReference type="Proteomes" id="UP000002494">
    <property type="component" value="Chromosome 8"/>
</dbReference>
<dbReference type="Bgee" id="ENSRNOG00000054479">
    <property type="expression patterns" value="Expressed in testis and 20 other cell types or tissues"/>
</dbReference>
<dbReference type="GO" id="GO:0005829">
    <property type="term" value="C:cytosol"/>
    <property type="evidence" value="ECO:0007669"/>
    <property type="project" value="Ensembl"/>
</dbReference>
<dbReference type="GO" id="GO:0070939">
    <property type="term" value="C:Dsl1/NZR complex"/>
    <property type="evidence" value="ECO:0000266"/>
    <property type="project" value="RGD"/>
</dbReference>
<dbReference type="GO" id="GO:0005783">
    <property type="term" value="C:endoplasmic reticulum"/>
    <property type="evidence" value="ECO:0000250"/>
    <property type="project" value="HGNC-UCL"/>
</dbReference>
<dbReference type="GO" id="GO:0005789">
    <property type="term" value="C:endoplasmic reticulum membrane"/>
    <property type="evidence" value="ECO:0007669"/>
    <property type="project" value="UniProtKB-SubCell"/>
</dbReference>
<dbReference type="GO" id="GO:0000776">
    <property type="term" value="C:kinetochore"/>
    <property type="evidence" value="ECO:0000250"/>
    <property type="project" value="HGNC-UCL"/>
</dbReference>
<dbReference type="GO" id="GO:0005828">
    <property type="term" value="C:kinetochore microtubule"/>
    <property type="evidence" value="ECO:0000250"/>
    <property type="project" value="HGNC-UCL"/>
</dbReference>
<dbReference type="GO" id="GO:0005811">
    <property type="term" value="C:lipid droplet"/>
    <property type="evidence" value="ECO:0000250"/>
    <property type="project" value="UniProtKB"/>
</dbReference>
<dbReference type="GO" id="GO:0005634">
    <property type="term" value="C:nucleus"/>
    <property type="evidence" value="ECO:0000250"/>
    <property type="project" value="HGNC-UCL"/>
</dbReference>
<dbReference type="GO" id="GO:1990423">
    <property type="term" value="C:RZZ complex"/>
    <property type="evidence" value="ECO:0000266"/>
    <property type="project" value="RGD"/>
</dbReference>
<dbReference type="GO" id="GO:0000922">
    <property type="term" value="C:spindle pole"/>
    <property type="evidence" value="ECO:0000250"/>
    <property type="project" value="HGNC-UCL"/>
</dbReference>
<dbReference type="GO" id="GO:0051301">
    <property type="term" value="P:cell division"/>
    <property type="evidence" value="ECO:0007669"/>
    <property type="project" value="UniProtKB-KW"/>
</dbReference>
<dbReference type="GO" id="GO:0006888">
    <property type="term" value="P:endoplasmic reticulum to Golgi vesicle-mediated transport"/>
    <property type="evidence" value="ECO:0000250"/>
    <property type="project" value="HGNC-UCL"/>
</dbReference>
<dbReference type="GO" id="GO:0000132">
    <property type="term" value="P:establishment of mitotic spindle orientation"/>
    <property type="evidence" value="ECO:0000266"/>
    <property type="project" value="RGD"/>
</dbReference>
<dbReference type="GO" id="GO:0007030">
    <property type="term" value="P:Golgi organization"/>
    <property type="evidence" value="ECO:0000266"/>
    <property type="project" value="RGD"/>
</dbReference>
<dbReference type="GO" id="GO:0007080">
    <property type="term" value="P:mitotic metaphase chromosome alignment"/>
    <property type="evidence" value="ECO:0000266"/>
    <property type="project" value="RGD"/>
</dbReference>
<dbReference type="GO" id="GO:0000070">
    <property type="term" value="P:mitotic sister chromatid segregation"/>
    <property type="evidence" value="ECO:0000250"/>
    <property type="project" value="HGNC-UCL"/>
</dbReference>
<dbReference type="GO" id="GO:0007094">
    <property type="term" value="P:mitotic spindle assembly checkpoint signaling"/>
    <property type="evidence" value="ECO:0000250"/>
    <property type="project" value="HGNC-UCL"/>
</dbReference>
<dbReference type="GO" id="GO:0034501">
    <property type="term" value="P:protein localization to kinetochore"/>
    <property type="evidence" value="ECO:0000266"/>
    <property type="project" value="RGD"/>
</dbReference>
<dbReference type="GO" id="GO:0015031">
    <property type="term" value="P:protein transport"/>
    <property type="evidence" value="ECO:0007669"/>
    <property type="project" value="UniProtKB-KW"/>
</dbReference>
<dbReference type="GO" id="GO:0065003">
    <property type="term" value="P:protein-containing complex assembly"/>
    <property type="evidence" value="ECO:0000250"/>
    <property type="project" value="HGNC-UCL"/>
</dbReference>
<dbReference type="GO" id="GO:0007096">
    <property type="term" value="P:regulation of exit from mitosis"/>
    <property type="evidence" value="ECO:0000250"/>
    <property type="project" value="HGNC-UCL"/>
</dbReference>
<dbReference type="FunFam" id="1.10.357.150:FF:000001">
    <property type="entry name" value="centromere/kinetochore protein zw10 homolog"/>
    <property type="match status" value="1"/>
</dbReference>
<dbReference type="Gene3D" id="1.10.357.150">
    <property type="match status" value="1"/>
</dbReference>
<dbReference type="InterPro" id="IPR046362">
    <property type="entry name" value="Zw10/DSL1_C_sf"/>
</dbReference>
<dbReference type="InterPro" id="IPR048343">
    <property type="entry name" value="ZW10_C"/>
</dbReference>
<dbReference type="InterPro" id="IPR055148">
    <property type="entry name" value="ZW10_C_2"/>
</dbReference>
<dbReference type="InterPro" id="IPR048344">
    <property type="entry name" value="Zw10_middle"/>
</dbReference>
<dbReference type="InterPro" id="IPR009361">
    <property type="entry name" value="Zw10_N"/>
</dbReference>
<dbReference type="PANTHER" id="PTHR12205">
    <property type="entry name" value="CENTROMERE/KINETOCHORE PROTEIN ZW10"/>
    <property type="match status" value="1"/>
</dbReference>
<dbReference type="PANTHER" id="PTHR12205:SF0">
    <property type="entry name" value="CENTROMERE_KINETOCHORE PROTEIN ZW10 HOMOLOG"/>
    <property type="match status" value="1"/>
</dbReference>
<dbReference type="Pfam" id="PF20666">
    <property type="entry name" value="ZW10_C"/>
    <property type="match status" value="1"/>
</dbReference>
<dbReference type="Pfam" id="PF22766">
    <property type="entry name" value="ZW10_C2"/>
    <property type="match status" value="1"/>
</dbReference>
<dbReference type="Pfam" id="PF20665">
    <property type="entry name" value="Zw10_middle"/>
    <property type="match status" value="1"/>
</dbReference>
<dbReference type="Pfam" id="PF06248">
    <property type="entry name" value="Zw10_N"/>
    <property type="match status" value="1"/>
</dbReference>
<evidence type="ECO:0000250" key="1">
    <source>
        <dbReference type="UniProtKB" id="O43264"/>
    </source>
</evidence>
<evidence type="ECO:0000255" key="2"/>
<evidence type="ECO:0000305" key="3"/>
<feature type="initiator methionine" description="Removed" evidence="1">
    <location>
        <position position="1"/>
    </location>
</feature>
<feature type="chain" id="PRO_0000184959" description="Centromere/kinetochore protein zw10 homolog">
    <location>
        <begin position="2"/>
        <end position="777"/>
    </location>
</feature>
<feature type="region of interest" description="Interaction with RINT1" evidence="1">
    <location>
        <begin position="2"/>
        <end position="316"/>
    </location>
</feature>
<feature type="region of interest" description="Interaction with ZWINT" evidence="1">
    <location>
        <begin position="2"/>
        <end position="81"/>
    </location>
</feature>
<feature type="coiled-coil region" evidence="2">
    <location>
        <begin position="14"/>
        <end position="130"/>
    </location>
</feature>
<feature type="modified residue" description="N-acetylalanine" evidence="1">
    <location>
        <position position="2"/>
    </location>
</feature>
<feature type="modified residue" description="Phosphoserine" evidence="1">
    <location>
        <position position="3"/>
    </location>
</feature>
<feature type="modified residue" description="Phosphoserine" evidence="1">
    <location>
        <position position="12"/>
    </location>
</feature>
<feature type="modified residue" description="N6-acetyllysine" evidence="1">
    <location>
        <position position="775"/>
    </location>
</feature>
<reference key="1">
    <citation type="journal article" date="2004" name="Genome Res.">
        <title>The status, quality, and expansion of the NIH full-length cDNA project: the Mammalian Gene Collection (MGC).</title>
        <authorList>
            <consortium name="The MGC Project Team"/>
        </authorList>
    </citation>
    <scope>NUCLEOTIDE SEQUENCE [LARGE SCALE MRNA]</scope>
    <source>
        <tissue>Testis</tissue>
    </source>
</reference>